<feature type="chain" id="PRO_0000132695" description="Small ribosomal subunit protein uS4">
    <location>
        <begin position="1"/>
        <end position="195"/>
    </location>
</feature>
<feature type="domain" description="S4 RNA-binding" evidence="2">
    <location>
        <begin position="109"/>
        <end position="183"/>
    </location>
</feature>
<feature type="region of interest" description="Disordered" evidence="3">
    <location>
        <begin position="165"/>
        <end position="195"/>
    </location>
</feature>
<feature type="sequence conflict" description="In Ref. 1; CAB41492." evidence="5" ref="1">
    <original>A</original>
    <variation>V</variation>
    <location>
        <position position="57"/>
    </location>
</feature>
<feature type="sequence conflict" description="In Ref. 1; CAB41492." evidence="5" ref="1">
    <original>E</original>
    <variation>A</variation>
    <location>
        <position position="69"/>
    </location>
</feature>
<feature type="sequence conflict" description="In Ref. 1; CAB41492." evidence="5" ref="1">
    <original>NALL</original>
    <variation>KSLV</variation>
    <location>
        <begin position="76"/>
        <end position="79"/>
    </location>
</feature>
<feature type="sequence conflict" description="In Ref. 1; CAB41492." evidence="5" ref="1">
    <original>E</original>
    <variation>Q</variation>
    <location>
        <position position="104"/>
    </location>
</feature>
<feature type="sequence conflict" description="In Ref. 1; CAB41492." evidence="5" ref="1">
    <original>V</original>
    <variation>A</variation>
    <location>
        <position position="138"/>
    </location>
</feature>
<feature type="sequence conflict" description="In Ref. 1; CAB41492." evidence="5" ref="1">
    <original>S</original>
    <variation>M</variation>
    <location>
        <position position="164"/>
    </location>
</feature>
<evidence type="ECO:0000250" key="1">
    <source>
        <dbReference type="UniProtKB" id="P46781"/>
    </source>
</evidence>
<evidence type="ECO:0000255" key="2">
    <source>
        <dbReference type="PROSITE-ProRule" id="PRU00182"/>
    </source>
</evidence>
<evidence type="ECO:0000256" key="3">
    <source>
        <dbReference type="SAM" id="MobiDB-lite"/>
    </source>
</evidence>
<evidence type="ECO:0000269" key="4">
    <source>
    </source>
</evidence>
<evidence type="ECO:0000305" key="5"/>
<evidence type="ECO:0000312" key="6">
    <source>
        <dbReference type="FlyBase" id="FBgn0010408"/>
    </source>
</evidence>
<dbReference type="EMBL" id="X69677">
    <property type="protein sequence ID" value="CAB41492.1"/>
    <property type="status" value="ALT_FRAME"/>
    <property type="molecule type" value="mRNA"/>
</dbReference>
<dbReference type="EMBL" id="AE014296">
    <property type="protein sequence ID" value="AAF50249.1"/>
    <property type="molecule type" value="Genomic_DNA"/>
</dbReference>
<dbReference type="EMBL" id="AE014296">
    <property type="protein sequence ID" value="AAN11946.1"/>
    <property type="molecule type" value="Genomic_DNA"/>
</dbReference>
<dbReference type="RefSeq" id="NP_001287008.1">
    <property type="nucleotide sequence ID" value="NM_001300079.1"/>
</dbReference>
<dbReference type="RefSeq" id="NP_524004.2">
    <property type="nucleotide sequence ID" value="NM_079280.4"/>
</dbReference>
<dbReference type="RefSeq" id="NP_729506.1">
    <property type="nucleotide sequence ID" value="NM_168350.2"/>
</dbReference>
<dbReference type="PDB" id="4V6W">
    <property type="method" value="EM"/>
    <property type="resolution" value="6.00 A"/>
    <property type="chains" value="AJ=1-195"/>
</dbReference>
<dbReference type="PDB" id="6XU6">
    <property type="method" value="EM"/>
    <property type="resolution" value="3.50 A"/>
    <property type="chains" value="AJ=4-184"/>
</dbReference>
<dbReference type="PDB" id="6XU7">
    <property type="method" value="EM"/>
    <property type="resolution" value="4.90 A"/>
    <property type="chains" value="AJ=4-184"/>
</dbReference>
<dbReference type="PDB" id="6XU8">
    <property type="method" value="EM"/>
    <property type="resolution" value="3.00 A"/>
    <property type="chains" value="AJ=4-184"/>
</dbReference>
<dbReference type="PDBsum" id="4V6W"/>
<dbReference type="PDBsum" id="6XU6"/>
<dbReference type="PDBsum" id="6XU7"/>
<dbReference type="PDBsum" id="6XU8"/>
<dbReference type="EMDB" id="EMD-10622"/>
<dbReference type="EMDB" id="EMD-10623"/>
<dbReference type="EMDB" id="EMD-10624"/>
<dbReference type="SMR" id="P55935"/>
<dbReference type="BioGRID" id="64500">
    <property type="interactions" value="114"/>
</dbReference>
<dbReference type="FunCoup" id="P55935">
    <property type="interactions" value="1524"/>
</dbReference>
<dbReference type="IntAct" id="P55935">
    <property type="interactions" value="4"/>
</dbReference>
<dbReference type="MINT" id="P55935"/>
<dbReference type="STRING" id="7227.FBpp0309532"/>
<dbReference type="GlyGen" id="P55935">
    <property type="glycosylation" value="1 site"/>
</dbReference>
<dbReference type="PaxDb" id="7227-FBpp0076152"/>
<dbReference type="DNASU" id="39108"/>
<dbReference type="EnsemblMetazoa" id="FBtr0076423">
    <property type="protein sequence ID" value="FBpp0076152"/>
    <property type="gene ID" value="FBgn0010408"/>
</dbReference>
<dbReference type="EnsemblMetazoa" id="FBtr0076425">
    <property type="protein sequence ID" value="FBpp0076154"/>
    <property type="gene ID" value="FBgn0010408"/>
</dbReference>
<dbReference type="EnsemblMetazoa" id="FBtr0342577">
    <property type="protein sequence ID" value="FBpp0309532"/>
    <property type="gene ID" value="FBgn0010408"/>
</dbReference>
<dbReference type="GeneID" id="39108"/>
<dbReference type="KEGG" id="dme:Dmel_CG3395"/>
<dbReference type="AGR" id="FB:FBgn0010408"/>
<dbReference type="CTD" id="6203"/>
<dbReference type="FlyBase" id="FBgn0010408">
    <property type="gene designation" value="RpS9"/>
</dbReference>
<dbReference type="VEuPathDB" id="VectorBase:FBgn0010408"/>
<dbReference type="eggNOG" id="KOG3301">
    <property type="taxonomic scope" value="Eukaryota"/>
</dbReference>
<dbReference type="GeneTree" id="ENSGT00550000074829"/>
<dbReference type="HOGENOM" id="CLU_089738_0_0_1"/>
<dbReference type="InParanoid" id="P55935"/>
<dbReference type="OMA" id="RQFITHG"/>
<dbReference type="OrthoDB" id="1697570at2759"/>
<dbReference type="PhylomeDB" id="P55935"/>
<dbReference type="Reactome" id="R-DME-156827">
    <property type="pathway name" value="L13a-mediated translational silencing of Ceruloplasmin expression"/>
</dbReference>
<dbReference type="Reactome" id="R-DME-1799339">
    <property type="pathway name" value="SRP-dependent cotranslational protein targeting to membrane"/>
</dbReference>
<dbReference type="Reactome" id="R-DME-6791226">
    <property type="pathway name" value="Major pathway of rRNA processing in the nucleolus and cytosol"/>
</dbReference>
<dbReference type="Reactome" id="R-DME-72649">
    <property type="pathway name" value="Translation initiation complex formation"/>
</dbReference>
<dbReference type="Reactome" id="R-DME-72689">
    <property type="pathway name" value="Formation of a pool of free 40S subunits"/>
</dbReference>
<dbReference type="Reactome" id="R-DME-72695">
    <property type="pathway name" value="Formation of the ternary complex, and subsequently, the 43S complex"/>
</dbReference>
<dbReference type="Reactome" id="R-DME-72702">
    <property type="pathway name" value="Ribosomal scanning and start codon recognition"/>
</dbReference>
<dbReference type="Reactome" id="R-DME-72706">
    <property type="pathway name" value="GTP hydrolysis and joining of the 60S ribosomal subunit"/>
</dbReference>
<dbReference type="Reactome" id="R-DME-975956">
    <property type="pathway name" value="Nonsense Mediated Decay (NMD) independent of the Exon Junction Complex (EJC)"/>
</dbReference>
<dbReference type="Reactome" id="R-DME-975957">
    <property type="pathway name" value="Nonsense Mediated Decay (NMD) enhanced by the Exon Junction Complex (EJC)"/>
</dbReference>
<dbReference type="SignaLink" id="P55935"/>
<dbReference type="BioGRID-ORCS" id="39108">
    <property type="hits" value="1 hit in 1 CRISPR screen"/>
</dbReference>
<dbReference type="ChiTaRS" id="RpS9">
    <property type="organism name" value="fly"/>
</dbReference>
<dbReference type="GenomeRNAi" id="39108"/>
<dbReference type="PRO" id="PR:P55935"/>
<dbReference type="Proteomes" id="UP000000803">
    <property type="component" value="Chromosome 3L"/>
</dbReference>
<dbReference type="Bgee" id="FBgn0010408">
    <property type="expression patterns" value="Expressed in adult enteroendocrine precursor cell in adult midgut (Drosophila) and 279 other cell types or tissues"/>
</dbReference>
<dbReference type="ExpressionAtlas" id="P55935">
    <property type="expression patterns" value="baseline and differential"/>
</dbReference>
<dbReference type="GO" id="GO:0005737">
    <property type="term" value="C:cytoplasm"/>
    <property type="evidence" value="ECO:0000314"/>
    <property type="project" value="FlyBase"/>
</dbReference>
<dbReference type="GO" id="GO:0005829">
    <property type="term" value="C:cytosol"/>
    <property type="evidence" value="ECO:0007005"/>
    <property type="project" value="FlyBase"/>
</dbReference>
<dbReference type="GO" id="GO:0022626">
    <property type="term" value="C:cytosolic ribosome"/>
    <property type="evidence" value="ECO:0000314"/>
    <property type="project" value="FlyBase"/>
</dbReference>
<dbReference type="GO" id="GO:0022627">
    <property type="term" value="C:cytosolic small ribosomal subunit"/>
    <property type="evidence" value="ECO:0000318"/>
    <property type="project" value="GO_Central"/>
</dbReference>
<dbReference type="GO" id="GO:0005730">
    <property type="term" value="C:nucleolus"/>
    <property type="evidence" value="ECO:0000314"/>
    <property type="project" value="FlyBase"/>
</dbReference>
<dbReference type="GO" id="GO:0032040">
    <property type="term" value="C:small-subunit processome"/>
    <property type="evidence" value="ECO:0000250"/>
    <property type="project" value="UniProtKB"/>
</dbReference>
<dbReference type="GO" id="GO:0019843">
    <property type="term" value="F:rRNA binding"/>
    <property type="evidence" value="ECO:0000318"/>
    <property type="project" value="GO_Central"/>
</dbReference>
<dbReference type="GO" id="GO:0003735">
    <property type="term" value="F:structural constituent of ribosome"/>
    <property type="evidence" value="ECO:0000314"/>
    <property type="project" value="FlyBase"/>
</dbReference>
<dbReference type="GO" id="GO:0002181">
    <property type="term" value="P:cytoplasmic translation"/>
    <property type="evidence" value="ECO:0000304"/>
    <property type="project" value="FlyBase"/>
</dbReference>
<dbReference type="GO" id="GO:0042274">
    <property type="term" value="P:ribosomal small subunit biogenesis"/>
    <property type="evidence" value="ECO:0000250"/>
    <property type="project" value="UniProtKB"/>
</dbReference>
<dbReference type="CDD" id="cd00165">
    <property type="entry name" value="S4"/>
    <property type="match status" value="1"/>
</dbReference>
<dbReference type="FunFam" id="3.10.290.10:FF:000021">
    <property type="entry name" value="40S ribosomal protein S9"/>
    <property type="match status" value="1"/>
</dbReference>
<dbReference type="Gene3D" id="3.10.290.10">
    <property type="entry name" value="RNA-binding S4 domain"/>
    <property type="match status" value="1"/>
</dbReference>
<dbReference type="InterPro" id="IPR022801">
    <property type="entry name" value="Ribosomal_uS4"/>
</dbReference>
<dbReference type="InterPro" id="IPR018079">
    <property type="entry name" value="Ribosomal_uS4_CS"/>
</dbReference>
<dbReference type="InterPro" id="IPR005710">
    <property type="entry name" value="Ribosomal_uS4_euk/arc"/>
</dbReference>
<dbReference type="InterPro" id="IPR001912">
    <property type="entry name" value="Ribosomal_uS4_N"/>
</dbReference>
<dbReference type="InterPro" id="IPR002942">
    <property type="entry name" value="S4_RNA-bd"/>
</dbReference>
<dbReference type="InterPro" id="IPR036986">
    <property type="entry name" value="S4_RNA-bd_sf"/>
</dbReference>
<dbReference type="NCBIfam" id="NF003139">
    <property type="entry name" value="PRK04051.1"/>
    <property type="match status" value="1"/>
</dbReference>
<dbReference type="NCBIfam" id="TIGR01018">
    <property type="entry name" value="uS4_arch"/>
    <property type="match status" value="1"/>
</dbReference>
<dbReference type="PANTHER" id="PTHR11831">
    <property type="entry name" value="30S 40S RIBOSOMAL PROTEIN"/>
    <property type="match status" value="1"/>
</dbReference>
<dbReference type="PANTHER" id="PTHR11831:SF5">
    <property type="entry name" value="40S RIBOSOMAL PROTEIN S9"/>
    <property type="match status" value="1"/>
</dbReference>
<dbReference type="Pfam" id="PF00163">
    <property type="entry name" value="Ribosomal_S4"/>
    <property type="match status" value="1"/>
</dbReference>
<dbReference type="Pfam" id="PF01479">
    <property type="entry name" value="S4"/>
    <property type="match status" value="1"/>
</dbReference>
<dbReference type="SMART" id="SM01390">
    <property type="entry name" value="Ribosomal_S4"/>
    <property type="match status" value="1"/>
</dbReference>
<dbReference type="SMART" id="SM00363">
    <property type="entry name" value="S4"/>
    <property type="match status" value="1"/>
</dbReference>
<dbReference type="SUPFAM" id="SSF55174">
    <property type="entry name" value="Alpha-L RNA-binding motif"/>
    <property type="match status" value="1"/>
</dbReference>
<dbReference type="PROSITE" id="PS00632">
    <property type="entry name" value="RIBOSOMAL_S4"/>
    <property type="match status" value="1"/>
</dbReference>
<dbReference type="PROSITE" id="PS50889">
    <property type="entry name" value="S4"/>
    <property type="match status" value="1"/>
</dbReference>
<reference key="1">
    <citation type="journal article" date="1993" name="DNA Seq.">
        <title>Sequence and expression of a Drosophila melanogaster cDNA encoding a putative ribosomal protein.</title>
        <authorList>
            <person name="Zhang N."/>
            <person name="Bownes M."/>
        </authorList>
    </citation>
    <scope>NUCLEOTIDE SEQUENCE [MRNA]</scope>
    <scope>DEVELOPMENTAL STAGE</scope>
    <source>
        <strain>Oregon-R</strain>
        <tissue>Ovary</tissue>
    </source>
</reference>
<reference key="2">
    <citation type="journal article" date="2000" name="Science">
        <title>The genome sequence of Drosophila melanogaster.</title>
        <authorList>
            <person name="Adams M.D."/>
            <person name="Celniker S.E."/>
            <person name="Holt R.A."/>
            <person name="Evans C.A."/>
            <person name="Gocayne J.D."/>
            <person name="Amanatides P.G."/>
            <person name="Scherer S.E."/>
            <person name="Li P.W."/>
            <person name="Hoskins R.A."/>
            <person name="Galle R.F."/>
            <person name="George R.A."/>
            <person name="Lewis S.E."/>
            <person name="Richards S."/>
            <person name="Ashburner M."/>
            <person name="Henderson S.N."/>
            <person name="Sutton G.G."/>
            <person name="Wortman J.R."/>
            <person name="Yandell M.D."/>
            <person name="Zhang Q."/>
            <person name="Chen L.X."/>
            <person name="Brandon R.C."/>
            <person name="Rogers Y.-H.C."/>
            <person name="Blazej R.G."/>
            <person name="Champe M."/>
            <person name="Pfeiffer B.D."/>
            <person name="Wan K.H."/>
            <person name="Doyle C."/>
            <person name="Baxter E.G."/>
            <person name="Helt G."/>
            <person name="Nelson C.R."/>
            <person name="Miklos G.L.G."/>
            <person name="Abril J.F."/>
            <person name="Agbayani A."/>
            <person name="An H.-J."/>
            <person name="Andrews-Pfannkoch C."/>
            <person name="Baldwin D."/>
            <person name="Ballew R.M."/>
            <person name="Basu A."/>
            <person name="Baxendale J."/>
            <person name="Bayraktaroglu L."/>
            <person name="Beasley E.M."/>
            <person name="Beeson K.Y."/>
            <person name="Benos P.V."/>
            <person name="Berman B.P."/>
            <person name="Bhandari D."/>
            <person name="Bolshakov S."/>
            <person name="Borkova D."/>
            <person name="Botchan M.R."/>
            <person name="Bouck J."/>
            <person name="Brokstein P."/>
            <person name="Brottier P."/>
            <person name="Burtis K.C."/>
            <person name="Busam D.A."/>
            <person name="Butler H."/>
            <person name="Cadieu E."/>
            <person name="Center A."/>
            <person name="Chandra I."/>
            <person name="Cherry J.M."/>
            <person name="Cawley S."/>
            <person name="Dahlke C."/>
            <person name="Davenport L.B."/>
            <person name="Davies P."/>
            <person name="de Pablos B."/>
            <person name="Delcher A."/>
            <person name="Deng Z."/>
            <person name="Mays A.D."/>
            <person name="Dew I."/>
            <person name="Dietz S.M."/>
            <person name="Dodson K."/>
            <person name="Doup L.E."/>
            <person name="Downes M."/>
            <person name="Dugan-Rocha S."/>
            <person name="Dunkov B.C."/>
            <person name="Dunn P."/>
            <person name="Durbin K.J."/>
            <person name="Evangelista C.C."/>
            <person name="Ferraz C."/>
            <person name="Ferriera S."/>
            <person name="Fleischmann W."/>
            <person name="Fosler C."/>
            <person name="Gabrielian A.E."/>
            <person name="Garg N.S."/>
            <person name="Gelbart W.M."/>
            <person name="Glasser K."/>
            <person name="Glodek A."/>
            <person name="Gong F."/>
            <person name="Gorrell J.H."/>
            <person name="Gu Z."/>
            <person name="Guan P."/>
            <person name="Harris M."/>
            <person name="Harris N.L."/>
            <person name="Harvey D.A."/>
            <person name="Heiman T.J."/>
            <person name="Hernandez J.R."/>
            <person name="Houck J."/>
            <person name="Hostin D."/>
            <person name="Houston K.A."/>
            <person name="Howland T.J."/>
            <person name="Wei M.-H."/>
            <person name="Ibegwam C."/>
            <person name="Jalali M."/>
            <person name="Kalush F."/>
            <person name="Karpen G.H."/>
            <person name="Ke Z."/>
            <person name="Kennison J.A."/>
            <person name="Ketchum K.A."/>
            <person name="Kimmel B.E."/>
            <person name="Kodira C.D."/>
            <person name="Kraft C.L."/>
            <person name="Kravitz S."/>
            <person name="Kulp D."/>
            <person name="Lai Z."/>
            <person name="Lasko P."/>
            <person name="Lei Y."/>
            <person name="Levitsky A.A."/>
            <person name="Li J.H."/>
            <person name="Li Z."/>
            <person name="Liang Y."/>
            <person name="Lin X."/>
            <person name="Liu X."/>
            <person name="Mattei B."/>
            <person name="McIntosh T.C."/>
            <person name="McLeod M.P."/>
            <person name="McPherson D."/>
            <person name="Merkulov G."/>
            <person name="Milshina N.V."/>
            <person name="Mobarry C."/>
            <person name="Morris J."/>
            <person name="Moshrefi A."/>
            <person name="Mount S.M."/>
            <person name="Moy M."/>
            <person name="Murphy B."/>
            <person name="Murphy L."/>
            <person name="Muzny D.M."/>
            <person name="Nelson D.L."/>
            <person name="Nelson D.R."/>
            <person name="Nelson K.A."/>
            <person name="Nixon K."/>
            <person name="Nusskern D.R."/>
            <person name="Pacleb J.M."/>
            <person name="Palazzolo M."/>
            <person name="Pittman G.S."/>
            <person name="Pan S."/>
            <person name="Pollard J."/>
            <person name="Puri V."/>
            <person name="Reese M.G."/>
            <person name="Reinert K."/>
            <person name="Remington K."/>
            <person name="Saunders R.D.C."/>
            <person name="Scheeler F."/>
            <person name="Shen H."/>
            <person name="Shue B.C."/>
            <person name="Siden-Kiamos I."/>
            <person name="Simpson M."/>
            <person name="Skupski M.P."/>
            <person name="Smith T.J."/>
            <person name="Spier E."/>
            <person name="Spradling A.C."/>
            <person name="Stapleton M."/>
            <person name="Strong R."/>
            <person name="Sun E."/>
            <person name="Svirskas R."/>
            <person name="Tector C."/>
            <person name="Turner R."/>
            <person name="Venter E."/>
            <person name="Wang A.H."/>
            <person name="Wang X."/>
            <person name="Wang Z.-Y."/>
            <person name="Wassarman D.A."/>
            <person name="Weinstock G.M."/>
            <person name="Weissenbach J."/>
            <person name="Williams S.M."/>
            <person name="Woodage T."/>
            <person name="Worley K.C."/>
            <person name="Wu D."/>
            <person name="Yang S."/>
            <person name="Yao Q.A."/>
            <person name="Ye J."/>
            <person name="Yeh R.-F."/>
            <person name="Zaveri J.S."/>
            <person name="Zhan M."/>
            <person name="Zhang G."/>
            <person name="Zhao Q."/>
            <person name="Zheng L."/>
            <person name="Zheng X.H."/>
            <person name="Zhong F.N."/>
            <person name="Zhong W."/>
            <person name="Zhou X."/>
            <person name="Zhu S.C."/>
            <person name="Zhu X."/>
            <person name="Smith H.O."/>
            <person name="Gibbs R.A."/>
            <person name="Myers E.W."/>
            <person name="Rubin G.M."/>
            <person name="Venter J.C."/>
        </authorList>
    </citation>
    <scope>NUCLEOTIDE SEQUENCE [LARGE SCALE GENOMIC DNA]</scope>
    <source>
        <strain>Berkeley</strain>
    </source>
</reference>
<reference key="3">
    <citation type="journal article" date="2002" name="Genome Biol.">
        <title>Annotation of the Drosophila melanogaster euchromatic genome: a systematic review.</title>
        <authorList>
            <person name="Misra S."/>
            <person name="Crosby M.A."/>
            <person name="Mungall C.J."/>
            <person name="Matthews B.B."/>
            <person name="Campbell K.S."/>
            <person name="Hradecky P."/>
            <person name="Huang Y."/>
            <person name="Kaminker J.S."/>
            <person name="Millburn G.H."/>
            <person name="Prochnik S.E."/>
            <person name="Smith C.D."/>
            <person name="Tupy J.L."/>
            <person name="Whitfield E.J."/>
            <person name="Bayraktaroglu L."/>
            <person name="Berman B.P."/>
            <person name="Bettencourt B.R."/>
            <person name="Celniker S.E."/>
            <person name="de Grey A.D.N.J."/>
            <person name="Drysdale R.A."/>
            <person name="Harris N.L."/>
            <person name="Richter J."/>
            <person name="Russo S."/>
            <person name="Schroeder A.J."/>
            <person name="Shu S.Q."/>
            <person name="Stapleton M."/>
            <person name="Yamada C."/>
            <person name="Ashburner M."/>
            <person name="Gelbart W.M."/>
            <person name="Rubin G.M."/>
            <person name="Lewis S.E."/>
        </authorList>
    </citation>
    <scope>GENOME REANNOTATION</scope>
    <source>
        <strain>Berkeley</strain>
    </source>
</reference>
<reference key="4">
    <citation type="journal article" date="2013" name="Nature">
        <title>Structures of the human and Drosophila 80S ribosome.</title>
        <authorList>
            <person name="Anger A.M."/>
            <person name="Armache J.P."/>
            <person name="Berninghausen O."/>
            <person name="Habeck M."/>
            <person name="Subklewe M."/>
            <person name="Wilson D.N."/>
            <person name="Beckmann R."/>
        </authorList>
    </citation>
    <scope>STRUCTURE BY ELECTRON MICROSCOPY (6.0 ANGSTROMS) OF THE 80S RIBOSOME</scope>
</reference>
<sequence length="195" mass="22623">MVNGRIPSVFSKTYVTPRRPYEKARLDQELKIIGEYGLRNKREVWRVKYALAKIRKAARELLTLDEKDEKRLFQGNALLRRLVRIGVLDESRMKLDYVLGLKIEDFLERRLQTQVFKLGLAKSIHHARVLIRQRHIRVRKQVVNIPSFVVRLDSQKHIDFSLKSPFGGGRPGRVKRKNLKKNQGGGGGAAEEEED</sequence>
<proteinExistence type="evidence at protein level"/>
<organism>
    <name type="scientific">Drosophila melanogaster</name>
    <name type="common">Fruit fly</name>
    <dbReference type="NCBI Taxonomy" id="7227"/>
    <lineage>
        <taxon>Eukaryota</taxon>
        <taxon>Metazoa</taxon>
        <taxon>Ecdysozoa</taxon>
        <taxon>Arthropoda</taxon>
        <taxon>Hexapoda</taxon>
        <taxon>Insecta</taxon>
        <taxon>Pterygota</taxon>
        <taxon>Neoptera</taxon>
        <taxon>Endopterygota</taxon>
        <taxon>Diptera</taxon>
        <taxon>Brachycera</taxon>
        <taxon>Muscomorpha</taxon>
        <taxon>Ephydroidea</taxon>
        <taxon>Drosophilidae</taxon>
        <taxon>Drosophila</taxon>
        <taxon>Sophophora</taxon>
    </lineage>
</organism>
<protein>
    <recommendedName>
        <fullName evidence="5">Small ribosomal subunit protein uS4</fullName>
    </recommendedName>
    <alternativeName>
        <fullName>40S ribosomal protein S9</fullName>
    </alternativeName>
</protein>
<name>RS9_DROME</name>
<keyword id="KW-0002">3D-structure</keyword>
<keyword id="KW-0963">Cytoplasm</keyword>
<keyword id="KW-0539">Nucleus</keyword>
<keyword id="KW-1185">Reference proteome</keyword>
<keyword id="KW-0687">Ribonucleoprotein</keyword>
<keyword id="KW-0689">Ribosomal protein</keyword>
<keyword id="KW-0694">RNA-binding</keyword>
<keyword id="KW-0699">rRNA-binding</keyword>
<comment type="function">
    <text evidence="1">Component of the small ribosomal subunit. The ribosome is a large ribonucleoprotein complex responsible for the synthesis of proteins in the cell. Part of the small subunit (SSU) processome, first precursor of the small eukaryotic ribosomal subunit. During the assembly of the SSU processome in the nucleolus, many ribosome biogenesis factors, an RNA chaperone and ribosomal proteins associate with the nascent pre-rRNA and work in concert to generate RNA folding, modifications, rearrangements and cleavage as well as targeted degradation of pre-ribosomal RNA by the RNA exosome.</text>
</comment>
<comment type="subunit">
    <text evidence="1">Component of the small ribosomal subunit. Identified in a IGF2BP1-dependent mRNP granule complex containing untranslated mRNAs. Part of the small subunit (SSU) processome, composed of more than 70 proteins and the RNA chaperone small nucleolar RNA (snoRNA) U3.</text>
</comment>
<comment type="subcellular location">
    <subcellularLocation>
        <location evidence="1">Cytoplasm</location>
    </subcellularLocation>
    <subcellularLocation>
        <location evidence="1">Nucleus</location>
        <location evidence="1">Nucleolus</location>
    </subcellularLocation>
    <text evidence="1">Localized in cytoplasmic mRNP granules containing untranslated mRNAs.</text>
</comment>
<comment type="developmental stage">
    <text evidence="4">Expressed both maternally and zygotically throughout development.</text>
</comment>
<comment type="similarity">
    <text evidence="5">Belongs to the universal ribosomal protein uS4 family.</text>
</comment>
<comment type="sequence caution" evidence="5">
    <conflict type="frameshift">
        <sequence resource="EMBL-CDS" id="CAB41492"/>
    </conflict>
</comment>
<accession>P55935</accession>
<accession>A4V1R4</accession>
<accession>Q6XIN2</accession>
<accession>Q9VT06</accession>
<accession>Q9VT07</accession>
<accession>Q9XZU5</accession>
<gene>
    <name evidence="6" type="primary">RpS9</name>
    <name evidence="6" type="ORF">CG3395</name>
</gene>